<protein>
    <recommendedName>
        <fullName evidence="1">Heat-inducible transcription repressor HrcA</fullName>
    </recommendedName>
</protein>
<keyword id="KW-1185">Reference proteome</keyword>
<keyword id="KW-0678">Repressor</keyword>
<keyword id="KW-0346">Stress response</keyword>
<keyword id="KW-0804">Transcription</keyword>
<keyword id="KW-0805">Transcription regulation</keyword>
<organism>
    <name type="scientific">Acetivibrio thermocellus (strain ATCC 27405 / DSM 1237 / JCM 9322 / NBRC 103400 / NCIMB 10682 / NRRL B-4536 / VPI 7372)</name>
    <name type="common">Clostridium thermocellum</name>
    <dbReference type="NCBI Taxonomy" id="203119"/>
    <lineage>
        <taxon>Bacteria</taxon>
        <taxon>Bacillati</taxon>
        <taxon>Bacillota</taxon>
        <taxon>Clostridia</taxon>
        <taxon>Eubacteriales</taxon>
        <taxon>Oscillospiraceae</taxon>
        <taxon>Acetivibrio</taxon>
    </lineage>
</organism>
<feature type="chain" id="PRO_1000010401" description="Heat-inducible transcription repressor HrcA">
    <location>
        <begin position="1"/>
        <end position="351"/>
    </location>
</feature>
<evidence type="ECO:0000255" key="1">
    <source>
        <dbReference type="HAMAP-Rule" id="MF_00081"/>
    </source>
</evidence>
<name>HRCA_ACET2</name>
<comment type="function">
    <text evidence="1">Negative regulator of class I heat shock genes (grpE-dnaK-dnaJ and groELS operons). Prevents heat-shock induction of these operons.</text>
</comment>
<comment type="similarity">
    <text evidence="1">Belongs to the HrcA family.</text>
</comment>
<sequence>MFLDERKKRILQSIIDDYISTAEPVGSRTVARKHELGLSSATIRNEMADLEEMGYLTQPHTSAGRIPSDKGYRFYVDQLMKQSELTMEEIYSIKSAMDTKINELSQLLKQVSVAMSKITKYASMAALPEKKNSVLKAVQVVPVEKGKALVVVITNSGTIKNSLINISETVLPEHLVYVSNIFNEKLSGLTIGQINMPVIREIELLMGPSQDILMPVLNGVTDCIEQIDKSEVFLEGAINMLNYPEFSNVERAREFLKLMVEKDLISRVLKDANSEKDKIVIKIGHENDIEEMKECSLITTTYTAGDVVIGTIGIIGPTRMEYSKVLAAINYMKSKMKEHVERLIGKDLSGK</sequence>
<proteinExistence type="inferred from homology"/>
<reference key="1">
    <citation type="submission" date="2007-02" db="EMBL/GenBank/DDBJ databases">
        <title>Complete sequence of Clostridium thermocellum ATCC 27405.</title>
        <authorList>
            <consortium name="US DOE Joint Genome Institute"/>
            <person name="Copeland A."/>
            <person name="Lucas S."/>
            <person name="Lapidus A."/>
            <person name="Barry K."/>
            <person name="Detter J.C."/>
            <person name="Glavina del Rio T."/>
            <person name="Hammon N."/>
            <person name="Israni S."/>
            <person name="Dalin E."/>
            <person name="Tice H."/>
            <person name="Pitluck S."/>
            <person name="Chertkov O."/>
            <person name="Brettin T."/>
            <person name="Bruce D."/>
            <person name="Han C."/>
            <person name="Tapia R."/>
            <person name="Gilna P."/>
            <person name="Schmutz J."/>
            <person name="Larimer F."/>
            <person name="Land M."/>
            <person name="Hauser L."/>
            <person name="Kyrpides N."/>
            <person name="Mikhailova N."/>
            <person name="Wu J.H.D."/>
            <person name="Newcomb M."/>
            <person name="Richardson P."/>
        </authorList>
    </citation>
    <scope>NUCLEOTIDE SEQUENCE [LARGE SCALE GENOMIC DNA]</scope>
    <source>
        <strain>ATCC 27405 / DSM 1237 / JCM 9322 / NBRC 103400 / NCIMB 10682 / NRRL B-4536 / VPI 7372</strain>
    </source>
</reference>
<accession>A3DF27</accession>
<dbReference type="EMBL" id="CP000568">
    <property type="protein sequence ID" value="ABN52556.1"/>
    <property type="molecule type" value="Genomic_DNA"/>
</dbReference>
<dbReference type="RefSeq" id="WP_003517022.1">
    <property type="nucleotide sequence ID" value="NC_009012.1"/>
</dbReference>
<dbReference type="SMR" id="A3DF27"/>
<dbReference type="STRING" id="203119.Cthe_1324"/>
<dbReference type="GeneID" id="35805381"/>
<dbReference type="KEGG" id="cth:Cthe_1324"/>
<dbReference type="eggNOG" id="COG1420">
    <property type="taxonomic scope" value="Bacteria"/>
</dbReference>
<dbReference type="HOGENOM" id="CLU_050019_1_0_9"/>
<dbReference type="OrthoDB" id="9783139at2"/>
<dbReference type="Proteomes" id="UP000002145">
    <property type="component" value="Chromosome"/>
</dbReference>
<dbReference type="GO" id="GO:0003677">
    <property type="term" value="F:DNA binding"/>
    <property type="evidence" value="ECO:0007669"/>
    <property type="project" value="InterPro"/>
</dbReference>
<dbReference type="GO" id="GO:0045892">
    <property type="term" value="P:negative regulation of DNA-templated transcription"/>
    <property type="evidence" value="ECO:0007669"/>
    <property type="project" value="UniProtKB-UniRule"/>
</dbReference>
<dbReference type="FunFam" id="1.10.10.10:FF:000049">
    <property type="entry name" value="Heat-inducible transcription repressor HrcA"/>
    <property type="match status" value="1"/>
</dbReference>
<dbReference type="Gene3D" id="3.30.450.40">
    <property type="match status" value="1"/>
</dbReference>
<dbReference type="Gene3D" id="3.30.390.60">
    <property type="entry name" value="Heat-inducible transcription repressor hrca homolog, domain 3"/>
    <property type="match status" value="1"/>
</dbReference>
<dbReference type="Gene3D" id="1.10.10.10">
    <property type="entry name" value="Winged helix-like DNA-binding domain superfamily/Winged helix DNA-binding domain"/>
    <property type="match status" value="1"/>
</dbReference>
<dbReference type="HAMAP" id="MF_00081">
    <property type="entry name" value="HrcA"/>
    <property type="match status" value="1"/>
</dbReference>
<dbReference type="InterPro" id="IPR029016">
    <property type="entry name" value="GAF-like_dom_sf"/>
</dbReference>
<dbReference type="InterPro" id="IPR002571">
    <property type="entry name" value="HrcA"/>
</dbReference>
<dbReference type="InterPro" id="IPR021153">
    <property type="entry name" value="HrcA_C"/>
</dbReference>
<dbReference type="InterPro" id="IPR036388">
    <property type="entry name" value="WH-like_DNA-bd_sf"/>
</dbReference>
<dbReference type="InterPro" id="IPR036390">
    <property type="entry name" value="WH_DNA-bd_sf"/>
</dbReference>
<dbReference type="InterPro" id="IPR023120">
    <property type="entry name" value="WHTH_transcript_rep_HrcA_IDD"/>
</dbReference>
<dbReference type="NCBIfam" id="TIGR00331">
    <property type="entry name" value="hrcA"/>
    <property type="match status" value="1"/>
</dbReference>
<dbReference type="PANTHER" id="PTHR34824">
    <property type="entry name" value="HEAT-INDUCIBLE TRANSCRIPTION REPRESSOR HRCA"/>
    <property type="match status" value="1"/>
</dbReference>
<dbReference type="PANTHER" id="PTHR34824:SF1">
    <property type="entry name" value="HEAT-INDUCIBLE TRANSCRIPTION REPRESSOR HRCA"/>
    <property type="match status" value="1"/>
</dbReference>
<dbReference type="Pfam" id="PF01628">
    <property type="entry name" value="HrcA"/>
    <property type="match status" value="1"/>
</dbReference>
<dbReference type="PIRSF" id="PIRSF005485">
    <property type="entry name" value="HrcA"/>
    <property type="match status" value="1"/>
</dbReference>
<dbReference type="SUPFAM" id="SSF55781">
    <property type="entry name" value="GAF domain-like"/>
    <property type="match status" value="1"/>
</dbReference>
<dbReference type="SUPFAM" id="SSF46785">
    <property type="entry name" value="Winged helix' DNA-binding domain"/>
    <property type="match status" value="1"/>
</dbReference>
<gene>
    <name evidence="1" type="primary">hrcA</name>
    <name type="ordered locus">Cthe_1324</name>
</gene>